<accession>P05142</accession>
<accession>Q62107</accession>
<dbReference type="EMBL" id="M12099">
    <property type="protein sequence ID" value="AAA40004.1"/>
    <property type="molecule type" value="Genomic_DNA"/>
</dbReference>
<dbReference type="EMBL" id="M11902">
    <property type="protein sequence ID" value="AAA40003.1"/>
    <property type="molecule type" value="mRNA"/>
</dbReference>
<dbReference type="PIR" id="A24264">
    <property type="entry name" value="A24264"/>
</dbReference>
<dbReference type="PIR" id="C29149">
    <property type="entry name" value="C29149"/>
</dbReference>
<dbReference type="STRING" id="10090.ENSMUSP00000135877"/>
<dbReference type="GlyGen" id="P05142">
    <property type="glycosylation" value="5 sites"/>
</dbReference>
<dbReference type="PaxDb" id="10090-ENSMUSP00000135877"/>
<dbReference type="AGR" id="MGI:97773"/>
<dbReference type="MGI" id="MGI:97773">
    <property type="gene designation" value="Prh1"/>
</dbReference>
<dbReference type="InParanoid" id="P05142"/>
<dbReference type="PRO" id="PR:P05142"/>
<dbReference type="Proteomes" id="UP000000589">
    <property type="component" value="Unplaced"/>
</dbReference>
<dbReference type="RNAct" id="P05142">
    <property type="molecule type" value="protein"/>
</dbReference>
<dbReference type="GO" id="GO:0005576">
    <property type="term" value="C:extracellular region"/>
    <property type="evidence" value="ECO:0007669"/>
    <property type="project" value="UniProtKB-SubCell"/>
</dbReference>
<dbReference type="InterPro" id="IPR026086">
    <property type="entry name" value="Pro-rich"/>
</dbReference>
<dbReference type="PANTHER" id="PTHR23203">
    <property type="entry name" value="PROLINE-RICH PROTEIN"/>
    <property type="match status" value="1"/>
</dbReference>
<dbReference type="PANTHER" id="PTHR23203:SF21">
    <property type="entry name" value="PROLINE-RICH PROTEIN 2-RELATED"/>
    <property type="match status" value="1"/>
</dbReference>
<dbReference type="Pfam" id="PF15240">
    <property type="entry name" value="Pro-rich"/>
    <property type="match status" value="1"/>
</dbReference>
<dbReference type="PRINTS" id="PR01217">
    <property type="entry name" value="PRICHEXTENSN"/>
</dbReference>
<dbReference type="SMART" id="SM01412">
    <property type="entry name" value="Pro-rich"/>
    <property type="match status" value="1"/>
</dbReference>
<keyword id="KW-1185">Reference proteome</keyword>
<keyword id="KW-0677">Repeat</keyword>
<keyword id="KW-0964">Secreted</keyword>
<keyword id="KW-0732">Signal</keyword>
<proteinExistence type="evidence at transcript level"/>
<reference key="1">
    <citation type="journal article" date="1985" name="J. Biol. Chem.">
        <title>The structure and organization of a proline-rich protein gene of a mouse multigene family.</title>
        <authorList>
            <person name="Ann D.K."/>
            <person name="Carlson D.M."/>
        </authorList>
    </citation>
    <scope>NUCLEOTIDE SEQUENCE [GENOMIC DNA]</scope>
</reference>
<reference key="2">
    <citation type="journal article" date="1985" name="J. Biol. Chem.">
        <title>Novel multigene families encoding highly repetitive peptide sequences. Sequence analyses of rat and mouse proline-rich protein cDNAs.</title>
        <authorList>
            <person name="Clements S."/>
            <person name="Mehansho H."/>
            <person name="Carlson D.M."/>
        </authorList>
    </citation>
    <scope>NUCLEOTIDE SEQUENCE [MRNA] OF 1-227</scope>
</reference>
<evidence type="ECO:0000255" key="1"/>
<evidence type="ECO:0000256" key="2">
    <source>
        <dbReference type="SAM" id="MobiDB-lite"/>
    </source>
</evidence>
<evidence type="ECO:0000305" key="3"/>
<feature type="signal peptide" evidence="1">
    <location>
        <begin position="1"/>
        <end position="15"/>
    </location>
</feature>
<feature type="chain" id="PRO_0000022133" description="Proline-rich protein HaeIII subfamily 1">
    <location>
        <begin position="16"/>
        <end position="261"/>
    </location>
</feature>
<feature type="region of interest" description="Disordered" evidence="2">
    <location>
        <begin position="15"/>
        <end position="261"/>
    </location>
</feature>
<feature type="compositionally biased region" description="Pro residues" evidence="2">
    <location>
        <begin position="32"/>
        <end position="44"/>
    </location>
</feature>
<feature type="compositionally biased region" description="Pro residues" evidence="2">
    <location>
        <begin position="51"/>
        <end position="237"/>
    </location>
</feature>
<feature type="compositionally biased region" description="Low complexity" evidence="2">
    <location>
        <begin position="238"/>
        <end position="261"/>
    </location>
</feature>
<feature type="sequence conflict" description="In Ref. 2; AAA40003." evidence="3" ref="2">
    <original>G</original>
    <variation>Q</variation>
    <location>
        <position position="18"/>
    </location>
</feature>
<feature type="sequence conflict" description="In Ref. 1; AAA40004." evidence="3" ref="1">
    <original>N</original>
    <variation>L</variation>
    <location>
        <position position="23"/>
    </location>
</feature>
<feature type="sequence conflict" description="In Ref. 1; AAA40004." evidence="3" ref="1">
    <original>Q</original>
    <variation>P</variation>
    <location>
        <position position="102"/>
    </location>
</feature>
<feature type="sequence conflict" description="In Ref. 2; AAA40003." evidence="3" ref="2">
    <original>Q</original>
    <variation>P</variation>
    <location>
        <position position="116"/>
    </location>
</feature>
<feature type="sequence conflict" description="In Ref. 1; AAA40004." evidence="3" ref="1">
    <original>P</original>
    <variation>T</variation>
    <location>
        <position position="180"/>
    </location>
</feature>
<feature type="sequence conflict" description="In Ref. 1; AAA40004." evidence="3" ref="1">
    <original>R</original>
    <variation>Q</variation>
    <location>
        <position position="200"/>
    </location>
</feature>
<feature type="sequence conflict" description="In Ref. 2; AAA40003." evidence="3" ref="2">
    <original>P</original>
    <variation>L</variation>
    <location>
        <position position="213"/>
    </location>
</feature>
<feature type="sequence conflict" description="In Ref. 2; AAA40003." evidence="3" ref="2">
    <original>G</original>
    <variation>A</variation>
    <location>
        <position position="223"/>
    </location>
</feature>
<comment type="subcellular location">
    <subcellularLocation>
        <location evidence="3">Secreted</location>
    </subcellularLocation>
</comment>
<protein>
    <recommendedName>
        <fullName>Proline-rich protein HaeIII subfamily 1</fullName>
    </recommendedName>
    <alternativeName>
        <fullName>Proline-rich protein MP-2</fullName>
    </alternativeName>
</protein>
<name>PRH1_MOUSE</name>
<organism>
    <name type="scientific">Mus musculus</name>
    <name type="common">Mouse</name>
    <dbReference type="NCBI Taxonomy" id="10090"/>
    <lineage>
        <taxon>Eukaryota</taxon>
        <taxon>Metazoa</taxon>
        <taxon>Chordata</taxon>
        <taxon>Craniata</taxon>
        <taxon>Vertebrata</taxon>
        <taxon>Euteleostomi</taxon>
        <taxon>Mammalia</taxon>
        <taxon>Eutheria</taxon>
        <taxon>Euarchontoglires</taxon>
        <taxon>Glires</taxon>
        <taxon>Rodentia</taxon>
        <taxon>Myomorpha</taxon>
        <taxon>Muroidea</taxon>
        <taxon>Muridae</taxon>
        <taxon>Murinae</taxon>
        <taxon>Mus</taxon>
        <taxon>Mus</taxon>
    </lineage>
</organism>
<gene>
    <name type="primary">Prh1</name>
    <name type="synonym">Prp</name>
</gene>
<sequence length="261" mass="26090">MLVVLFTVALLALSSAQGPREENQNQIQIPNQRPPPSGFQPRPPVNGSQQGPPPPGGPQPRPPQGPPPPGGPQPRPPQGPPPPGGPQPRPPQGPPPPGGPQQRPPQGPPPPGGPQQRPPQGPPPPGGPQPRPPQGPPPPGGPQLRPPQGPPPPAGPQPRPPQGPPPPAGPQPRPPQGPPPTGPQPRPTQGPPPTGGPQQRPPQGPPPPGGPQPRPPQGPPPPGGPQPSPTQGPPPTGGPQQTPPLAGNTQGPPQGRPQGPR</sequence>